<proteinExistence type="evidence at protein level"/>
<comment type="catalytic activity">
    <reaction evidence="1">
        <text>5-amino-1-(5-phospho-D-ribosyl)imidazole-4-carboxylate + L-aspartate + ATP = (2S)-2-[5-amino-1-(5-phospho-beta-D-ribosyl)imidazole-4-carboxamido]succinate + ADP + phosphate + 2 H(+)</text>
        <dbReference type="Rhea" id="RHEA:22628"/>
        <dbReference type="ChEBI" id="CHEBI:15378"/>
        <dbReference type="ChEBI" id="CHEBI:29991"/>
        <dbReference type="ChEBI" id="CHEBI:30616"/>
        <dbReference type="ChEBI" id="CHEBI:43474"/>
        <dbReference type="ChEBI" id="CHEBI:58443"/>
        <dbReference type="ChEBI" id="CHEBI:77657"/>
        <dbReference type="ChEBI" id="CHEBI:456216"/>
        <dbReference type="EC" id="6.3.2.6"/>
    </reaction>
</comment>
<comment type="pathway">
    <text evidence="1">Purine metabolism; IMP biosynthesis via de novo pathway; 5-amino-1-(5-phospho-D-ribosyl)imidazole-4-carboxamide from 5-amino-1-(5-phospho-D-ribosyl)imidazole-4-carboxylate: step 1/2.</text>
</comment>
<comment type="similarity">
    <text evidence="1">Belongs to the SAICAR synthetase family.</text>
</comment>
<keyword id="KW-0002">3D-structure</keyword>
<keyword id="KW-0067">ATP-binding</keyword>
<keyword id="KW-0436">Ligase</keyword>
<keyword id="KW-0547">Nucleotide-binding</keyword>
<keyword id="KW-0658">Purine biosynthesis</keyword>
<keyword id="KW-1185">Reference proteome</keyword>
<feature type="chain" id="PRO_1000018702" description="Phosphoribosylaminoimidazole-succinocarboxamide synthase">
    <location>
        <begin position="1"/>
        <end position="242"/>
    </location>
</feature>
<feature type="strand" evidence="2">
    <location>
        <begin position="6"/>
        <end position="9"/>
    </location>
</feature>
<feature type="strand" evidence="2">
    <location>
        <begin position="11"/>
        <end position="17"/>
    </location>
</feature>
<feature type="strand" evidence="2">
    <location>
        <begin position="23"/>
        <end position="28"/>
    </location>
</feature>
<feature type="strand" evidence="2">
    <location>
        <begin position="30"/>
        <end position="34"/>
    </location>
</feature>
<feature type="turn" evidence="2">
    <location>
        <begin position="35"/>
        <end position="38"/>
    </location>
</feature>
<feature type="strand" evidence="2">
    <location>
        <begin position="39"/>
        <end position="42"/>
    </location>
</feature>
<feature type="helix" evidence="2">
    <location>
        <begin position="46"/>
        <end position="63"/>
    </location>
</feature>
<feature type="strand" evidence="2">
    <location>
        <begin position="68"/>
        <end position="73"/>
    </location>
</feature>
<feature type="strand" evidence="2">
    <location>
        <begin position="75"/>
        <end position="82"/>
    </location>
</feature>
<feature type="strand" evidence="2">
    <location>
        <begin position="84"/>
        <end position="86"/>
    </location>
</feature>
<feature type="strand" evidence="2">
    <location>
        <begin position="88"/>
        <end position="96"/>
    </location>
</feature>
<feature type="helix" evidence="2">
    <location>
        <begin position="99"/>
        <end position="105"/>
    </location>
</feature>
<feature type="strand" evidence="2">
    <location>
        <begin position="112"/>
        <end position="122"/>
    </location>
</feature>
<feature type="turn" evidence="2">
    <location>
        <begin position="125"/>
        <end position="128"/>
    </location>
</feature>
<feature type="helix" evidence="2">
    <location>
        <begin position="134"/>
        <end position="139"/>
    </location>
</feature>
<feature type="helix" evidence="2">
    <location>
        <begin position="145"/>
        <end position="168"/>
    </location>
</feature>
<feature type="strand" evidence="2">
    <location>
        <begin position="171"/>
        <end position="178"/>
    </location>
</feature>
<feature type="strand" evidence="2">
    <location>
        <begin position="180"/>
        <end position="183"/>
    </location>
</feature>
<feature type="turn" evidence="2">
    <location>
        <begin position="199"/>
        <end position="201"/>
    </location>
</feature>
<feature type="strand" evidence="2">
    <location>
        <begin position="202"/>
        <end position="206"/>
    </location>
</feature>
<feature type="turn" evidence="2">
    <location>
        <begin position="207"/>
        <end position="209"/>
    </location>
</feature>
<feature type="helix" evidence="2">
    <location>
        <begin position="216"/>
        <end position="219"/>
    </location>
</feature>
<feature type="helix" evidence="2">
    <location>
        <begin position="225"/>
        <end position="236"/>
    </location>
</feature>
<gene>
    <name evidence="1" type="primary">purC</name>
    <name type="ordered locus">ECH_0290</name>
</gene>
<organism>
    <name type="scientific">Ehrlichia chaffeensis (strain ATCC CRL-10679 / Arkansas)</name>
    <dbReference type="NCBI Taxonomy" id="205920"/>
    <lineage>
        <taxon>Bacteria</taxon>
        <taxon>Pseudomonadati</taxon>
        <taxon>Pseudomonadota</taxon>
        <taxon>Alphaproteobacteria</taxon>
        <taxon>Rickettsiales</taxon>
        <taxon>Anaplasmataceae</taxon>
        <taxon>Ehrlichia</taxon>
    </lineage>
</organism>
<protein>
    <recommendedName>
        <fullName evidence="1">Phosphoribosylaminoimidazole-succinocarboxamide synthase</fullName>
        <ecNumber evidence="1">6.3.2.6</ecNumber>
    </recommendedName>
    <alternativeName>
        <fullName evidence="1">SAICAR synthetase</fullName>
    </alternativeName>
</protein>
<evidence type="ECO:0000255" key="1">
    <source>
        <dbReference type="HAMAP-Rule" id="MF_00137"/>
    </source>
</evidence>
<evidence type="ECO:0007829" key="2">
    <source>
        <dbReference type="PDB" id="3KRE"/>
    </source>
</evidence>
<sequence length="242" mass="28036">MENKEKIYEGKAKIIFATLNPLEVIQHFKDEITAFNNKKAAIIHEKGILNNYISSFLMKKLIDKGIKTHFISLLNQREQLVKKITIIPIEVVIRNLAAGNFSKRFQIADGTPFKSPIIEFYYKNDELSDPMVSEGHILSFQWLTNQELEKIKILSLKINNILSELFFNVGIKLVDFKLEFGKLHNDEQSDLFLADEISPDTCRLWDISTNKRLDKDRYRLNLGNVIEGYREVAHKLNAIPNL</sequence>
<name>PUR7_EHRCR</name>
<dbReference type="EC" id="6.3.2.6" evidence="1"/>
<dbReference type="EMBL" id="CP000236">
    <property type="protein sequence ID" value="ABD45002.1"/>
    <property type="molecule type" value="Genomic_DNA"/>
</dbReference>
<dbReference type="RefSeq" id="WP_006011312.1">
    <property type="nucleotide sequence ID" value="NC_007799.1"/>
</dbReference>
<dbReference type="PDB" id="3KRE">
    <property type="method" value="X-ray"/>
    <property type="resolution" value="1.80 A"/>
    <property type="chains" value="A=1-242"/>
</dbReference>
<dbReference type="PDBsum" id="3KRE"/>
<dbReference type="SMR" id="Q2GHH2"/>
<dbReference type="STRING" id="205920.ECH_0290"/>
<dbReference type="KEGG" id="ech:ECH_0290"/>
<dbReference type="eggNOG" id="COG0152">
    <property type="taxonomic scope" value="Bacteria"/>
</dbReference>
<dbReference type="HOGENOM" id="CLU_061495_2_0_5"/>
<dbReference type="OrthoDB" id="9801549at2"/>
<dbReference type="UniPathway" id="UPA00074">
    <property type="reaction ID" value="UER00131"/>
</dbReference>
<dbReference type="EvolutionaryTrace" id="Q2GHH2"/>
<dbReference type="Proteomes" id="UP000008320">
    <property type="component" value="Chromosome"/>
</dbReference>
<dbReference type="GO" id="GO:0005829">
    <property type="term" value="C:cytosol"/>
    <property type="evidence" value="ECO:0007669"/>
    <property type="project" value="TreeGrafter"/>
</dbReference>
<dbReference type="GO" id="GO:0005524">
    <property type="term" value="F:ATP binding"/>
    <property type="evidence" value="ECO:0007669"/>
    <property type="project" value="UniProtKB-KW"/>
</dbReference>
<dbReference type="GO" id="GO:0004639">
    <property type="term" value="F:phosphoribosylaminoimidazolesuccinocarboxamide synthase activity"/>
    <property type="evidence" value="ECO:0007669"/>
    <property type="project" value="UniProtKB-UniRule"/>
</dbReference>
<dbReference type="GO" id="GO:0006189">
    <property type="term" value="P:'de novo' IMP biosynthetic process"/>
    <property type="evidence" value="ECO:0007669"/>
    <property type="project" value="UniProtKB-UniRule"/>
</dbReference>
<dbReference type="GO" id="GO:0009236">
    <property type="term" value="P:cobalamin biosynthetic process"/>
    <property type="evidence" value="ECO:0007669"/>
    <property type="project" value="InterPro"/>
</dbReference>
<dbReference type="CDD" id="cd01415">
    <property type="entry name" value="SAICAR_synt_PurC"/>
    <property type="match status" value="1"/>
</dbReference>
<dbReference type="FunFam" id="3.30.470.20:FF:000006">
    <property type="entry name" value="Phosphoribosylaminoimidazole-succinocarboxamide synthase"/>
    <property type="match status" value="1"/>
</dbReference>
<dbReference type="Gene3D" id="3.30.470.20">
    <property type="entry name" value="ATP-grasp fold, B domain"/>
    <property type="match status" value="1"/>
</dbReference>
<dbReference type="Gene3D" id="3.30.200.20">
    <property type="entry name" value="Phosphorylase Kinase, domain 1"/>
    <property type="match status" value="1"/>
</dbReference>
<dbReference type="HAMAP" id="MF_00137">
    <property type="entry name" value="SAICAR_synth"/>
    <property type="match status" value="1"/>
</dbReference>
<dbReference type="InterPro" id="IPR028923">
    <property type="entry name" value="SAICAR_synt/ADE2_N"/>
</dbReference>
<dbReference type="InterPro" id="IPR033934">
    <property type="entry name" value="SAICAR_synt_PurC"/>
</dbReference>
<dbReference type="InterPro" id="IPR001636">
    <property type="entry name" value="SAICAR_synth"/>
</dbReference>
<dbReference type="InterPro" id="IPR050089">
    <property type="entry name" value="SAICAR_synthetase"/>
</dbReference>
<dbReference type="InterPro" id="IPR018236">
    <property type="entry name" value="SAICAR_synthetase_CS"/>
</dbReference>
<dbReference type="NCBIfam" id="TIGR00081">
    <property type="entry name" value="purC"/>
    <property type="match status" value="1"/>
</dbReference>
<dbReference type="PANTHER" id="PTHR43599">
    <property type="entry name" value="MULTIFUNCTIONAL PROTEIN ADE2"/>
    <property type="match status" value="1"/>
</dbReference>
<dbReference type="PANTHER" id="PTHR43599:SF3">
    <property type="entry name" value="SI:DKEY-6E2.2"/>
    <property type="match status" value="1"/>
</dbReference>
<dbReference type="Pfam" id="PF01259">
    <property type="entry name" value="SAICAR_synt"/>
    <property type="match status" value="1"/>
</dbReference>
<dbReference type="SUPFAM" id="SSF56104">
    <property type="entry name" value="SAICAR synthase-like"/>
    <property type="match status" value="1"/>
</dbReference>
<dbReference type="PROSITE" id="PS01058">
    <property type="entry name" value="SAICAR_SYNTHETASE_2"/>
    <property type="match status" value="1"/>
</dbReference>
<accession>Q2GHH2</accession>
<reference key="1">
    <citation type="journal article" date="2006" name="PLoS Genet.">
        <title>Comparative genomics of emerging human ehrlichiosis agents.</title>
        <authorList>
            <person name="Dunning Hotopp J.C."/>
            <person name="Lin M."/>
            <person name="Madupu R."/>
            <person name="Crabtree J."/>
            <person name="Angiuoli S.V."/>
            <person name="Eisen J.A."/>
            <person name="Seshadri R."/>
            <person name="Ren Q."/>
            <person name="Wu M."/>
            <person name="Utterback T.R."/>
            <person name="Smith S."/>
            <person name="Lewis M."/>
            <person name="Khouri H."/>
            <person name="Zhang C."/>
            <person name="Niu H."/>
            <person name="Lin Q."/>
            <person name="Ohashi N."/>
            <person name="Zhi N."/>
            <person name="Nelson W.C."/>
            <person name="Brinkac L.M."/>
            <person name="Dodson R.J."/>
            <person name="Rosovitz M.J."/>
            <person name="Sundaram J.P."/>
            <person name="Daugherty S.C."/>
            <person name="Davidsen T."/>
            <person name="Durkin A.S."/>
            <person name="Gwinn M.L."/>
            <person name="Haft D.H."/>
            <person name="Selengut J.D."/>
            <person name="Sullivan S.A."/>
            <person name="Zafar N."/>
            <person name="Zhou L."/>
            <person name="Benahmed F."/>
            <person name="Forberger H."/>
            <person name="Halpin R."/>
            <person name="Mulligan S."/>
            <person name="Robinson J."/>
            <person name="White O."/>
            <person name="Rikihisa Y."/>
            <person name="Tettelin H."/>
        </authorList>
    </citation>
    <scope>NUCLEOTIDE SEQUENCE [LARGE SCALE GENOMIC DNA]</scope>
    <source>
        <strain>ATCC CRL-10679 / Arkansas</strain>
    </source>
</reference>